<sequence length="565" mass="65381">MSGRSKRESRGSTRGKRESESRGSSGRVKRERDREREPEAASSRGSPVRVKREFEPASAREAPASVVPFVRVKREREVDEDSEPEREVRAKNGRVDSEDRRSRHCPYLDTINRSVLDFDFEKLCSISLSHINAYACLVCGKYFQGRGLKSHAYIHSVQFSHHVFLNLHTLKFYCLPDNYEIIDSSLEDITYVLKPTFTKQQIANLDKQAKLSRAYDGTTYLPGIVGLNNIKANDYANAVLQALSNVPPLRNYFLEEDNYKNIKRPPGDIMFLLVQRFGELMRKLWNPRNFKAHVSPHEMLQAVVLCSKKTFQITKQGDGVDFLSWFLNALHSALGGTKKKKKTIVTDVFQGSMRIFTKKLPHPDLPAEEKEQLLHNDEYQETMVESTFMYLTLDLPTAPLYKDEKEQLIIPQVPLFNILAKFNGITEKEYKTYKENFLKRFQLTKLPPYLIFCIKRFTKNNFFVEKNPTIVNFPITNVDLREYLSEEVQAVHKNTTYDLIANIVHDGKPSEGSYRIHVLHHGTGKWYELQDLQVTDILPQMITLSEAYIQIWKRRDNDETNQQGA</sequence>
<name>UBP39_HUMAN</name>
<proteinExistence type="evidence at protein level"/>
<reference key="1">
    <citation type="journal article" date="2001" name="EMBO J.">
        <title>The 65 and 110 kDa SR-related proteins of the U4/U6*U5 tri-snRNP are essential for the assembly of mature spliceosomes.</title>
        <authorList>
            <person name="Makarova O.V."/>
            <person name="Makarov E.M."/>
            <person name="Luehrmann R."/>
        </authorList>
    </citation>
    <scope>NUCLEOTIDE SEQUENCE [MRNA] (ISOFORM 1)</scope>
    <scope>FUNCTION</scope>
    <scope>SUBCELLULAR LOCATION</scope>
    <scope>SUBUNIT</scope>
</reference>
<reference key="2">
    <citation type="journal article" date="2000" name="Genome Res.">
        <title>Identification of novel human genes evolutionarily conserved in Caenorhabditis elegans by comparative proteomics.</title>
        <authorList>
            <person name="Lai C.-H."/>
            <person name="Chou C.-Y."/>
            <person name="Ch'ang L.-Y."/>
            <person name="Liu C.-S."/>
            <person name="Lin W.-C."/>
        </authorList>
    </citation>
    <scope>NUCLEOTIDE SEQUENCE [LARGE SCALE MRNA] (ISOFORM 1)</scope>
</reference>
<reference key="3">
    <citation type="journal article" date="2004" name="Nat. Genet.">
        <title>Complete sequencing and characterization of 21,243 full-length human cDNAs.</title>
        <authorList>
            <person name="Ota T."/>
            <person name="Suzuki Y."/>
            <person name="Nishikawa T."/>
            <person name="Otsuki T."/>
            <person name="Sugiyama T."/>
            <person name="Irie R."/>
            <person name="Wakamatsu A."/>
            <person name="Hayashi K."/>
            <person name="Sato H."/>
            <person name="Nagai K."/>
            <person name="Kimura K."/>
            <person name="Makita H."/>
            <person name="Sekine M."/>
            <person name="Obayashi M."/>
            <person name="Nishi T."/>
            <person name="Shibahara T."/>
            <person name="Tanaka T."/>
            <person name="Ishii S."/>
            <person name="Yamamoto J."/>
            <person name="Saito K."/>
            <person name="Kawai Y."/>
            <person name="Isono Y."/>
            <person name="Nakamura Y."/>
            <person name="Nagahari K."/>
            <person name="Murakami K."/>
            <person name="Yasuda T."/>
            <person name="Iwayanagi T."/>
            <person name="Wagatsuma M."/>
            <person name="Shiratori A."/>
            <person name="Sudo H."/>
            <person name="Hosoiri T."/>
            <person name="Kaku Y."/>
            <person name="Kodaira H."/>
            <person name="Kondo H."/>
            <person name="Sugawara M."/>
            <person name="Takahashi M."/>
            <person name="Kanda K."/>
            <person name="Yokoi T."/>
            <person name="Furuya T."/>
            <person name="Kikkawa E."/>
            <person name="Omura Y."/>
            <person name="Abe K."/>
            <person name="Kamihara K."/>
            <person name="Katsuta N."/>
            <person name="Sato K."/>
            <person name="Tanikawa M."/>
            <person name="Yamazaki M."/>
            <person name="Ninomiya K."/>
            <person name="Ishibashi T."/>
            <person name="Yamashita H."/>
            <person name="Murakawa K."/>
            <person name="Fujimori K."/>
            <person name="Tanai H."/>
            <person name="Kimata M."/>
            <person name="Watanabe M."/>
            <person name="Hiraoka S."/>
            <person name="Chiba Y."/>
            <person name="Ishida S."/>
            <person name="Ono Y."/>
            <person name="Takiguchi S."/>
            <person name="Watanabe S."/>
            <person name="Yosida M."/>
            <person name="Hotuta T."/>
            <person name="Kusano J."/>
            <person name="Kanehori K."/>
            <person name="Takahashi-Fujii A."/>
            <person name="Hara H."/>
            <person name="Tanase T.-O."/>
            <person name="Nomura Y."/>
            <person name="Togiya S."/>
            <person name="Komai F."/>
            <person name="Hara R."/>
            <person name="Takeuchi K."/>
            <person name="Arita M."/>
            <person name="Imose N."/>
            <person name="Musashino K."/>
            <person name="Yuuki H."/>
            <person name="Oshima A."/>
            <person name="Sasaki N."/>
            <person name="Aotsuka S."/>
            <person name="Yoshikawa Y."/>
            <person name="Matsunawa H."/>
            <person name="Ichihara T."/>
            <person name="Shiohata N."/>
            <person name="Sano S."/>
            <person name="Moriya S."/>
            <person name="Momiyama H."/>
            <person name="Satoh N."/>
            <person name="Takami S."/>
            <person name="Terashima Y."/>
            <person name="Suzuki O."/>
            <person name="Nakagawa S."/>
            <person name="Senoh A."/>
            <person name="Mizoguchi H."/>
            <person name="Goto Y."/>
            <person name="Shimizu F."/>
            <person name="Wakebe H."/>
            <person name="Hishigaki H."/>
            <person name="Watanabe T."/>
            <person name="Sugiyama A."/>
            <person name="Takemoto M."/>
            <person name="Kawakami B."/>
            <person name="Yamazaki M."/>
            <person name="Watanabe K."/>
            <person name="Kumagai A."/>
            <person name="Itakura S."/>
            <person name="Fukuzumi Y."/>
            <person name="Fujimori Y."/>
            <person name="Komiyama M."/>
            <person name="Tashiro H."/>
            <person name="Tanigami A."/>
            <person name="Fujiwara T."/>
            <person name="Ono T."/>
            <person name="Yamada K."/>
            <person name="Fujii Y."/>
            <person name="Ozaki K."/>
            <person name="Hirao M."/>
            <person name="Ohmori Y."/>
            <person name="Kawabata A."/>
            <person name="Hikiji T."/>
            <person name="Kobatake N."/>
            <person name="Inagaki H."/>
            <person name="Ikema Y."/>
            <person name="Okamoto S."/>
            <person name="Okitani R."/>
            <person name="Kawakami T."/>
            <person name="Noguchi S."/>
            <person name="Itoh T."/>
            <person name="Shigeta K."/>
            <person name="Senba T."/>
            <person name="Matsumura K."/>
            <person name="Nakajima Y."/>
            <person name="Mizuno T."/>
            <person name="Morinaga M."/>
            <person name="Sasaki M."/>
            <person name="Togashi T."/>
            <person name="Oyama M."/>
            <person name="Hata H."/>
            <person name="Watanabe M."/>
            <person name="Komatsu T."/>
            <person name="Mizushima-Sugano J."/>
            <person name="Satoh T."/>
            <person name="Shirai Y."/>
            <person name="Takahashi Y."/>
            <person name="Nakagawa K."/>
            <person name="Okumura K."/>
            <person name="Nagase T."/>
            <person name="Nomura N."/>
            <person name="Kikuchi H."/>
            <person name="Masuho Y."/>
            <person name="Yamashita R."/>
            <person name="Nakai K."/>
            <person name="Yada T."/>
            <person name="Nakamura Y."/>
            <person name="Ohara O."/>
            <person name="Isogai T."/>
            <person name="Sugano S."/>
        </authorList>
    </citation>
    <scope>NUCLEOTIDE SEQUENCE [LARGE SCALE MRNA] (ISOFORMS 1; 2 AND 3)</scope>
    <source>
        <tissue>Caudate nucleus</tissue>
        <tissue>Embryo</tissue>
    </source>
</reference>
<reference key="4">
    <citation type="submission" date="2005-04" db="EMBL/GenBank/DDBJ databases">
        <authorList>
            <person name="Suzuki Y."/>
            <person name="Sugano S."/>
            <person name="Totoki Y."/>
            <person name="Toyoda A."/>
            <person name="Takeda T."/>
            <person name="Sakaki Y."/>
            <person name="Tanaka A."/>
            <person name="Yokoyama S."/>
        </authorList>
    </citation>
    <scope>NUCLEOTIDE SEQUENCE [LARGE SCALE MRNA] (ISOFORM 1)</scope>
    <source>
        <tissue>Liver</tissue>
    </source>
</reference>
<reference key="5">
    <citation type="journal article" date="2005" name="Nature">
        <title>Generation and annotation of the DNA sequences of human chromosomes 2 and 4.</title>
        <authorList>
            <person name="Hillier L.W."/>
            <person name="Graves T.A."/>
            <person name="Fulton R.S."/>
            <person name="Fulton L.A."/>
            <person name="Pepin K.H."/>
            <person name="Minx P."/>
            <person name="Wagner-McPherson C."/>
            <person name="Layman D."/>
            <person name="Wylie K."/>
            <person name="Sekhon M."/>
            <person name="Becker M.C."/>
            <person name="Fewell G.A."/>
            <person name="Delehaunty K.D."/>
            <person name="Miner T.L."/>
            <person name="Nash W.E."/>
            <person name="Kremitzki C."/>
            <person name="Oddy L."/>
            <person name="Du H."/>
            <person name="Sun H."/>
            <person name="Bradshaw-Cordum H."/>
            <person name="Ali J."/>
            <person name="Carter J."/>
            <person name="Cordes M."/>
            <person name="Harris A."/>
            <person name="Isak A."/>
            <person name="van Brunt A."/>
            <person name="Nguyen C."/>
            <person name="Du F."/>
            <person name="Courtney L."/>
            <person name="Kalicki J."/>
            <person name="Ozersky P."/>
            <person name="Abbott S."/>
            <person name="Armstrong J."/>
            <person name="Belter E.A."/>
            <person name="Caruso L."/>
            <person name="Cedroni M."/>
            <person name="Cotton M."/>
            <person name="Davidson T."/>
            <person name="Desai A."/>
            <person name="Elliott G."/>
            <person name="Erb T."/>
            <person name="Fronick C."/>
            <person name="Gaige T."/>
            <person name="Haakenson W."/>
            <person name="Haglund K."/>
            <person name="Holmes A."/>
            <person name="Harkins R."/>
            <person name="Kim K."/>
            <person name="Kruchowski S.S."/>
            <person name="Strong C.M."/>
            <person name="Grewal N."/>
            <person name="Goyea E."/>
            <person name="Hou S."/>
            <person name="Levy A."/>
            <person name="Martinka S."/>
            <person name="Mead K."/>
            <person name="McLellan M.D."/>
            <person name="Meyer R."/>
            <person name="Randall-Maher J."/>
            <person name="Tomlinson C."/>
            <person name="Dauphin-Kohlberg S."/>
            <person name="Kozlowicz-Reilly A."/>
            <person name="Shah N."/>
            <person name="Swearengen-Shahid S."/>
            <person name="Snider J."/>
            <person name="Strong J.T."/>
            <person name="Thompson J."/>
            <person name="Yoakum M."/>
            <person name="Leonard S."/>
            <person name="Pearman C."/>
            <person name="Trani L."/>
            <person name="Radionenko M."/>
            <person name="Waligorski J.E."/>
            <person name="Wang C."/>
            <person name="Rock S.M."/>
            <person name="Tin-Wollam A.-M."/>
            <person name="Maupin R."/>
            <person name="Latreille P."/>
            <person name="Wendl M.C."/>
            <person name="Yang S.-P."/>
            <person name="Pohl C."/>
            <person name="Wallis J.W."/>
            <person name="Spieth J."/>
            <person name="Bieri T.A."/>
            <person name="Berkowicz N."/>
            <person name="Nelson J.O."/>
            <person name="Osborne J."/>
            <person name="Ding L."/>
            <person name="Meyer R."/>
            <person name="Sabo A."/>
            <person name="Shotland Y."/>
            <person name="Sinha P."/>
            <person name="Wohldmann P.E."/>
            <person name="Cook L.L."/>
            <person name="Hickenbotham M.T."/>
            <person name="Eldred J."/>
            <person name="Williams D."/>
            <person name="Jones T.A."/>
            <person name="She X."/>
            <person name="Ciccarelli F.D."/>
            <person name="Izaurralde E."/>
            <person name="Taylor J."/>
            <person name="Schmutz J."/>
            <person name="Myers R.M."/>
            <person name="Cox D.R."/>
            <person name="Huang X."/>
            <person name="McPherson J.D."/>
            <person name="Mardis E.R."/>
            <person name="Clifton S.W."/>
            <person name="Warren W.C."/>
            <person name="Chinwalla A.T."/>
            <person name="Eddy S.R."/>
            <person name="Marra M.A."/>
            <person name="Ovcharenko I."/>
            <person name="Furey T.S."/>
            <person name="Miller W."/>
            <person name="Eichler E.E."/>
            <person name="Bork P."/>
            <person name="Suyama M."/>
            <person name="Torrents D."/>
            <person name="Waterston R.H."/>
            <person name="Wilson R.K."/>
        </authorList>
    </citation>
    <scope>NUCLEOTIDE SEQUENCE [LARGE SCALE GENOMIC DNA]</scope>
</reference>
<reference key="6">
    <citation type="submission" date="2005-09" db="EMBL/GenBank/DDBJ databases">
        <authorList>
            <person name="Mural R.J."/>
            <person name="Istrail S."/>
            <person name="Sutton G.G."/>
            <person name="Florea L."/>
            <person name="Halpern A.L."/>
            <person name="Mobarry C.M."/>
            <person name="Lippert R."/>
            <person name="Walenz B."/>
            <person name="Shatkay H."/>
            <person name="Dew I."/>
            <person name="Miller J.R."/>
            <person name="Flanigan M.J."/>
            <person name="Edwards N.J."/>
            <person name="Bolanos R."/>
            <person name="Fasulo D."/>
            <person name="Halldorsson B.V."/>
            <person name="Hannenhalli S."/>
            <person name="Turner R."/>
            <person name="Yooseph S."/>
            <person name="Lu F."/>
            <person name="Nusskern D.R."/>
            <person name="Shue B.C."/>
            <person name="Zheng X.H."/>
            <person name="Zhong F."/>
            <person name="Delcher A.L."/>
            <person name="Huson D.H."/>
            <person name="Kravitz S.A."/>
            <person name="Mouchard L."/>
            <person name="Reinert K."/>
            <person name="Remington K.A."/>
            <person name="Clark A.G."/>
            <person name="Waterman M.S."/>
            <person name="Eichler E.E."/>
            <person name="Adams M.D."/>
            <person name="Hunkapiller M.W."/>
            <person name="Myers E.W."/>
            <person name="Venter J.C."/>
        </authorList>
    </citation>
    <scope>NUCLEOTIDE SEQUENCE [LARGE SCALE GENOMIC DNA]</scope>
</reference>
<reference key="7">
    <citation type="journal article" date="2004" name="Genome Res.">
        <title>The status, quality, and expansion of the NIH full-length cDNA project: the Mammalian Gene Collection (MGC).</title>
        <authorList>
            <consortium name="The MGC Project Team"/>
        </authorList>
    </citation>
    <scope>NUCLEOTIDE SEQUENCE [LARGE SCALE MRNA] (ISOFORM 1)</scope>
    <source>
        <tissue>Skin</tissue>
        <tissue>Uterus</tissue>
    </source>
</reference>
<reference key="8">
    <citation type="submission" date="1999-02" db="EMBL/GenBank/DDBJ databases">
        <title>Functional prediction of the coding sequences of 75 new genes deduced by analysis of cDNA clones from human fetal liver.</title>
        <authorList>
            <person name="Zhang C."/>
            <person name="Yu Y."/>
            <person name="Zhang S."/>
            <person name="Wei H."/>
            <person name="Bi J."/>
            <person name="Zhou G."/>
            <person name="Dong C."/>
            <person name="Zai Y."/>
            <person name="Xu W."/>
            <person name="Gao F."/>
            <person name="Liu M."/>
            <person name="He F."/>
        </authorList>
    </citation>
    <scope>NUCLEOTIDE SEQUENCE [LARGE SCALE MRNA] OF 104-565</scope>
    <source>
        <tissue>Fetal liver</tissue>
    </source>
</reference>
<reference key="9">
    <citation type="submission" date="1999-05" db="EMBL/GenBank/DDBJ databases">
        <title>Human partial CDS from CD34+ stem cells.</title>
        <authorList>
            <person name="Ye M."/>
            <person name="Zhang Q.-H."/>
            <person name="Zhou J."/>
            <person name="Shen Y."/>
            <person name="Wu X.-Y."/>
            <person name="Guan Z.Q."/>
            <person name="Wang L."/>
            <person name="Fan H.-Y."/>
            <person name="Mao Y.-F."/>
            <person name="Dai M."/>
            <person name="Huang Q.-H."/>
            <person name="Chen S.-J."/>
            <person name="Chen Z."/>
        </authorList>
    </citation>
    <scope>NUCLEOTIDE SEQUENCE [LARGE SCALE MRNA] OF 305-565</scope>
    <source>
        <tissue>Umbilical cord blood</tissue>
    </source>
</reference>
<reference key="10">
    <citation type="journal article" date="2006" name="Cell">
        <title>Global, in vivo, and site-specific phosphorylation dynamics in signaling networks.</title>
        <authorList>
            <person name="Olsen J.V."/>
            <person name="Blagoev B."/>
            <person name="Gnad F."/>
            <person name="Macek B."/>
            <person name="Kumar C."/>
            <person name="Mortensen P."/>
            <person name="Mann M."/>
        </authorList>
    </citation>
    <scope>PHOSPHORYLATION [LARGE SCALE ANALYSIS] AT SER-82</scope>
    <scope>IDENTIFICATION BY MASS SPECTROMETRY [LARGE SCALE ANALYSIS]</scope>
    <source>
        <tissue>Cervix carcinoma</tissue>
    </source>
</reference>
<reference key="11">
    <citation type="journal article" date="2006" name="RNA">
        <title>The network of protein-protein interactions within the human U4/U6.U5 tri-snRNP.</title>
        <authorList>
            <person name="Liu S."/>
            <person name="Rauhut R."/>
            <person name="Vornlocher H.-P."/>
            <person name="Luehrmann R."/>
        </authorList>
    </citation>
    <scope>SUBUNIT</scope>
</reference>
<reference key="12">
    <citation type="journal article" date="2008" name="Cell Cycle">
        <title>Usp39 is essential for mitotic spindle checkpoint integrity and controls mRNA-levels of aurora B.</title>
        <authorList>
            <person name="van Leuken R.J."/>
            <person name="Luna-Vargas M.P."/>
            <person name="Sixma T.K."/>
            <person name="Wolthuis R.M."/>
            <person name="Medema R.H."/>
        </authorList>
    </citation>
    <scope>FUNCTION</scope>
    <scope>ABSENCE OF UBIQUITIN-SPECIFIC PEPTIDASE ACTIVITY</scope>
</reference>
<reference key="13">
    <citation type="journal article" date="2008" name="Proc. Natl. Acad. Sci. U.S.A.">
        <title>A quantitative atlas of mitotic phosphorylation.</title>
        <authorList>
            <person name="Dephoure N."/>
            <person name="Zhou C."/>
            <person name="Villen J."/>
            <person name="Beausoleil S.A."/>
            <person name="Bakalarski C.E."/>
            <person name="Elledge S.J."/>
            <person name="Gygi S.P."/>
        </authorList>
    </citation>
    <scope>IDENTIFICATION BY MASS SPECTROMETRY [LARGE SCALE ANALYSIS]</scope>
    <source>
        <tissue>Cervix carcinoma</tissue>
    </source>
</reference>
<reference key="14">
    <citation type="journal article" date="2010" name="Sci. Signal.">
        <title>Quantitative phosphoproteomics reveals widespread full phosphorylation site occupancy during mitosis.</title>
        <authorList>
            <person name="Olsen J.V."/>
            <person name="Vermeulen M."/>
            <person name="Santamaria A."/>
            <person name="Kumar C."/>
            <person name="Miller M.L."/>
            <person name="Jensen L.J."/>
            <person name="Gnad F."/>
            <person name="Cox J."/>
            <person name="Jensen T.S."/>
            <person name="Nigg E.A."/>
            <person name="Brunak S."/>
            <person name="Mann M."/>
        </authorList>
    </citation>
    <scope>PHOSPHORYLATION [LARGE SCALE ANALYSIS] AT SER-82</scope>
    <scope>IDENTIFICATION BY MASS SPECTROMETRY [LARGE SCALE ANALYSIS]</scope>
    <source>
        <tissue>Cervix carcinoma</tissue>
    </source>
</reference>
<reference key="15">
    <citation type="journal article" date="2011" name="BMC Syst. Biol.">
        <title>Initial characterization of the human central proteome.</title>
        <authorList>
            <person name="Burkard T.R."/>
            <person name="Planyavsky M."/>
            <person name="Kaupe I."/>
            <person name="Breitwieser F.P."/>
            <person name="Buerckstuemmer T."/>
            <person name="Bennett K.L."/>
            <person name="Superti-Furga G."/>
            <person name="Colinge J."/>
        </authorList>
    </citation>
    <scope>IDENTIFICATION BY MASS SPECTROMETRY [LARGE SCALE ANALYSIS]</scope>
</reference>
<reference key="16">
    <citation type="journal article" date="2011" name="Sci. Signal.">
        <title>System-wide temporal characterization of the proteome and phosphoproteome of human embryonic stem cell differentiation.</title>
        <authorList>
            <person name="Rigbolt K.T."/>
            <person name="Prokhorova T.A."/>
            <person name="Akimov V."/>
            <person name="Henningsen J."/>
            <person name="Johansen P.T."/>
            <person name="Kratchmarova I."/>
            <person name="Kassem M."/>
            <person name="Mann M."/>
            <person name="Olsen J.V."/>
            <person name="Blagoev B."/>
        </authorList>
    </citation>
    <scope>PHOSPHORYLATION [LARGE SCALE ANALYSIS] AT SER-82</scope>
    <scope>IDENTIFICATION BY MASS SPECTROMETRY [LARGE SCALE ANALYSIS]</scope>
</reference>
<reference key="17">
    <citation type="journal article" date="2013" name="J. Proteome Res.">
        <title>Toward a comprehensive characterization of a human cancer cell phosphoproteome.</title>
        <authorList>
            <person name="Zhou H."/>
            <person name="Di Palma S."/>
            <person name="Preisinger C."/>
            <person name="Peng M."/>
            <person name="Polat A.N."/>
            <person name="Heck A.J."/>
            <person name="Mohammed S."/>
        </authorList>
    </citation>
    <scope>PHOSPHORYLATION [LARGE SCALE ANALYSIS] AT SER-46 AND SER-82</scope>
    <scope>IDENTIFICATION BY MASS SPECTROMETRY [LARGE SCALE ANALYSIS]</scope>
    <source>
        <tissue>Cervix carcinoma</tissue>
        <tissue>Erythroleukemia</tissue>
    </source>
</reference>
<reference key="18">
    <citation type="journal article" date="2014" name="J. Proteomics">
        <title>An enzyme assisted RP-RPLC approach for in-depth analysis of human liver phosphoproteome.</title>
        <authorList>
            <person name="Bian Y."/>
            <person name="Song C."/>
            <person name="Cheng K."/>
            <person name="Dong M."/>
            <person name="Wang F."/>
            <person name="Huang J."/>
            <person name="Sun D."/>
            <person name="Wang L."/>
            <person name="Ye M."/>
            <person name="Zou H."/>
        </authorList>
    </citation>
    <scope>PHOSPHORYLATION [LARGE SCALE ANALYSIS] AT SER-82</scope>
    <scope>IDENTIFICATION BY MASS SPECTROMETRY [LARGE SCALE ANALYSIS]</scope>
    <source>
        <tissue>Liver</tissue>
    </source>
</reference>
<reference key="19">
    <citation type="journal article" date="2017" name="Nat. Struct. Mol. Biol.">
        <title>Site-specific mapping of the human SUMO proteome reveals co-modification with phosphorylation.</title>
        <authorList>
            <person name="Hendriks I.A."/>
            <person name="Lyon D."/>
            <person name="Young C."/>
            <person name="Jensen L.J."/>
            <person name="Vertegaal A.C."/>
            <person name="Nielsen M.L."/>
        </authorList>
    </citation>
    <scope>SUMOYLATION [LARGE SCALE ANALYSIS] AT LYS-51</scope>
    <scope>IDENTIFICATION BY MASS SPECTROMETRY [LARGE SCALE ANALYSIS]</scope>
</reference>
<reference key="20">
    <citation type="journal article" date="2019" name="Cancer Lett.">
        <title>USP39 regulates DNA damage response and chemo-radiation resistance by deubiquitinating and stabilizing CHK2.</title>
        <authorList>
            <person name="Wu J."/>
            <person name="Chen Y."/>
            <person name="Geng G."/>
            <person name="Li L."/>
            <person name="Yin P."/>
            <person name="Nowsheen S."/>
            <person name="Li Y."/>
            <person name="Wu C."/>
            <person name="Liu J."/>
            <person name="Zhao F."/>
            <person name="Kim W."/>
            <person name="Zhou Q."/>
            <person name="Huang J."/>
            <person name="Guo G."/>
            <person name="Zhang C."/>
            <person name="Tu X."/>
            <person name="Gao X."/>
            <person name="Lou Z."/>
            <person name="Luo K."/>
            <person name="Qiao H."/>
            <person name="Yuan J."/>
        </authorList>
    </citation>
    <scope>FUNCTION</scope>
    <scope>CATALYTIC ACTIVITY</scope>
    <scope>MUTAGENESIS OF CYS-306</scope>
</reference>
<reference key="21">
    <citation type="journal article" date="2020" name="J. Immunol.">
        <title>USP39 Serves as a Deubiquitinase to Stabilize STAT1 and Sustains Type I IFN-Induced Antiviral Immunity.</title>
        <authorList>
            <person name="Peng Y."/>
            <person name="Guo J."/>
            <person name="Sun T."/>
            <person name="Fu Y."/>
            <person name="Zheng H."/>
            <person name="Dong C."/>
            <person name="Xiong S."/>
        </authorList>
    </citation>
    <scope>FUNCTION</scope>
    <scope>SUBCELLULAR LOCATION</scope>
    <scope>MUTAGENESIS OF CYS-136 AND CYS-139</scope>
</reference>
<reference key="22">
    <citation type="journal article" date="2021" name="Nucleic Acids Res.">
        <title>USP39 promotes non-homologous end-joining repair by poly(ADP-ribose)-induced liquid demixing.</title>
        <authorList>
            <person name="Kim J.J."/>
            <person name="Lee S.Y."/>
            <person name="Hwang Y."/>
            <person name="Kim S."/>
            <person name="Chung J.M."/>
            <person name="Park S."/>
            <person name="Yoon J."/>
            <person name="Yun H."/>
            <person name="Ji J.H."/>
            <person name="Chae S."/>
            <person name="Cho H."/>
            <person name="Kim C.G."/>
            <person name="Dawson T.M."/>
            <person name="Kim H."/>
            <person name="Dawson V.L."/>
            <person name="Kang H.C."/>
        </authorList>
    </citation>
    <scope>FUNCTION</scope>
    <scope>SUBCELLULAR LOCATION</scope>
</reference>
<reference key="23">
    <citation type="journal article" date="2023" name="J. Immunol.">
        <title>USP39 Regulates NF-kappaB-Mediated Inflammatory Responses through Deubiquitinating K48-Linked IkappaBalpha.</title>
        <authorList>
            <person name="Quan J."/>
            <person name="Zhao X."/>
            <person name="Xiao Y."/>
            <person name="Wu H."/>
            <person name="Di Q."/>
            <person name="Wu Z."/>
            <person name="Chen X."/>
            <person name="Tang H."/>
            <person name="Zhao J."/>
            <person name="Guan Y."/>
            <person name="Xu Y."/>
            <person name="Chen W."/>
        </authorList>
    </citation>
    <scope>FUNCTION</scope>
    <scope>CATALYTIC ACTIVITY</scope>
    <scope>MUTAGENESIS OF CYS-306</scope>
</reference>
<reference evidence="18" key="24">
    <citation type="journal article" date="2016" name="Science">
        <title>Molecular architecture of the human U4/U6.U5 tri-snRNP.</title>
        <authorList>
            <person name="Agafonov D.E."/>
            <person name="Kastner B."/>
            <person name="Dybkov O."/>
            <person name="Hofele R.V."/>
            <person name="Liu W.T."/>
            <person name="Urlaub H."/>
            <person name="Luhrmann R."/>
            <person name="Stark H."/>
        </authorList>
    </citation>
    <scope>STRUCTURE BY ELECTRON MICROSCOPY (7.00 ANGSTROMS)</scope>
    <scope>SUBCELLULAR LOCATION</scope>
    <scope>SUBUNIT</scope>
    <scope>IDENTIFICATION BY MASS SPECTROMETRY</scope>
</reference>
<gene>
    <name evidence="17" type="primary">USP39</name>
    <name type="ORF">CGI-21</name>
    <name type="ORF">HSPC332</name>
    <name type="ORF">PRO2855</name>
</gene>
<comment type="function">
    <text evidence="1 4 6 7 8 9 10 11">Deubiquitinating enzyme that plays a role in many cellular processes including cellular antiviral response, epithelial morphogenesis, DNA repair or B-cell development (PubMed:33127822, PubMed:34614178). Plays a role in pre-mRNA splicing as a component of the U4/U6-U5 tri-snRNP, one of the building blocks of the precatalytic spliceosome (PubMed:11350945, PubMed:26912367). Specifically regulates immunoglobulin gene rearrangement in a spliceosome-dependent manner, which involves modulating chromatin interactions at the Igh locus and therefore plays an essential role in B-cell development (By similarity). Regulates AURKB mRNA levels, and thereby plays a role in cytokinesis and in the spindle checkpoint (PubMed:18728397). Regulates apoptosis and G2/M cell cycle checkpoint in response to DNA damage by deubiquitinating and stabilizing CHK2 (PubMed:30771428). Also plays an important role in DNA repair by controlling the recruitment of XRCC4/LIG4 to DNA double-strand breaks for non-homologous end-joining repair (PubMed:34614178). Participates in antiviral activity by affecting the type I IFN signaling by stabilizing STAT1 and decreasing its 'Lys-6'-linked ubiquitination (PubMed:33127822). Contributes to non-canonical Wnt signaling during epidermal differentiation (By similarity). Acts as a negative regulator NF-kappa-B activation through deubiquitination of 'Lys-48'-linked ubiquitination of NFKBIA (PubMed:36651806).</text>
</comment>
<comment type="catalytic activity">
    <reaction evidence="8 11">
        <text>Thiol-dependent hydrolysis of ester, thioester, amide, peptide and isopeptide bonds formed by the C-terminal Gly of ubiquitin (a 76-residue protein attached to proteins as an intracellular targeting signal).</text>
        <dbReference type="EC" id="3.4.19.12"/>
    </reaction>
</comment>
<comment type="subunit">
    <text evidence="4 5 7">The U4/U6-U5 tri-snRNP complex is a building block of the precatalytic spliceosome (spliceosome B complex) (PubMed:11350945, PubMed:26912367). Component of the U4/U6-U5 tri-snRNP complex composed of the U4, U6 and U5 snRNAs and at least PRPF3, PRPF4, PRPF6, PRPF8, PRPF31, SNRNP200, TXNL4A, SNRNP40, SNRPB, SNRPD1, SNRPD2, SNRPD3, SNRPE, SNRPF, SNRPG, DDX23, CD2BP2, PPIH, SNU13, EFTUD2, SART1 and USP39, plus LSM2, LSM3, LSM4, LSM5, LSM6, LSM7 and LSM8 (PubMed:16723661, PubMed:26912367).</text>
</comment>
<comment type="interaction">
    <interactant intactId="EBI-1044822">
        <id>Q53GS9</id>
    </interactant>
    <interactant intactId="EBI-5323863">
        <id>Q5S007</id>
        <label>LRRK2</label>
    </interactant>
    <organismsDiffer>false</organismsDiffer>
    <experiments>3</experiments>
</comment>
<comment type="interaction">
    <interactant intactId="EBI-1044822">
        <id>Q53GS9</id>
    </interactant>
    <interactant intactId="EBI-539478">
        <id>Q96SB4</id>
        <label>SRPK1</label>
    </interactant>
    <organismsDiffer>false</organismsDiffer>
    <experiments>2</experiments>
</comment>
<comment type="subcellular location">
    <subcellularLocation>
        <location evidence="4 7 9 10">Nucleus</location>
    </subcellularLocation>
</comment>
<comment type="alternative products">
    <event type="alternative splicing"/>
    <isoform>
        <id>Q53GS9-1</id>
        <name>1</name>
        <sequence type="displayed"/>
    </isoform>
    <isoform>
        <id>Q53GS9-2</id>
        <name>2</name>
        <sequence type="described" ref="VSP_045167 VSP_045168"/>
    </isoform>
    <isoform>
        <id>Q53GS9-3</id>
        <name>3</name>
        <sequence type="described" ref="VSP_046822"/>
    </isoform>
</comment>
<comment type="similarity">
    <text evidence="15">Belongs to the peptidase C19 family.</text>
</comment>
<comment type="caution">
    <text evidence="6 16">Lacks the conserved His and Cys residues that are essential for the activity of de-ubiquitinating enzymes. Lacks ubiquitin C-terminal hydrolase activity (PubMed:18728397).</text>
</comment>
<comment type="sequence caution" evidence="15">
    <conflict type="frameshift">
        <sequence resource="EMBL-CDS" id="AAD27730"/>
    </conflict>
</comment>
<comment type="sequence caution" evidence="15">
    <conflict type="erroneous initiation">
        <sequence resource="EMBL-CDS" id="AAG35521"/>
    </conflict>
    <text>Truncated N-terminus.</text>
</comment>
<keyword id="KW-0002">3D-structure</keyword>
<keyword id="KW-0025">Alternative splicing</keyword>
<keyword id="KW-0131">Cell cycle</keyword>
<keyword id="KW-0132">Cell division</keyword>
<keyword id="KW-0378">Hydrolase</keyword>
<keyword id="KW-1017">Isopeptide bond</keyword>
<keyword id="KW-0479">Metal-binding</keyword>
<keyword id="KW-0507">mRNA processing</keyword>
<keyword id="KW-0508">mRNA splicing</keyword>
<keyword id="KW-0539">Nucleus</keyword>
<keyword id="KW-0597">Phosphoprotein</keyword>
<keyword id="KW-1267">Proteomics identification</keyword>
<keyword id="KW-1185">Reference proteome</keyword>
<keyword id="KW-0747">Spliceosome</keyword>
<keyword id="KW-0832">Ubl conjugation</keyword>
<keyword id="KW-0833">Ubl conjugation pathway</keyword>
<keyword id="KW-0862">Zinc</keyword>
<keyword id="KW-0863">Zinc-finger</keyword>
<organism>
    <name type="scientific">Homo sapiens</name>
    <name type="common">Human</name>
    <dbReference type="NCBI Taxonomy" id="9606"/>
    <lineage>
        <taxon>Eukaryota</taxon>
        <taxon>Metazoa</taxon>
        <taxon>Chordata</taxon>
        <taxon>Craniata</taxon>
        <taxon>Vertebrata</taxon>
        <taxon>Euteleostomi</taxon>
        <taxon>Mammalia</taxon>
        <taxon>Eutheria</taxon>
        <taxon>Euarchontoglires</taxon>
        <taxon>Primates</taxon>
        <taxon>Haplorrhini</taxon>
        <taxon>Catarrhini</taxon>
        <taxon>Hominidae</taxon>
        <taxon>Homo</taxon>
    </lineage>
</organism>
<dbReference type="EC" id="3.4.19.12" evidence="8 11"/>
<dbReference type="EMBL" id="AF353989">
    <property type="protein sequence ID" value="AAK49524.1"/>
    <property type="molecule type" value="mRNA"/>
</dbReference>
<dbReference type="EMBL" id="AF132955">
    <property type="protein sequence ID" value="AAD27730.1"/>
    <property type="status" value="ALT_FRAME"/>
    <property type="molecule type" value="mRNA"/>
</dbReference>
<dbReference type="EMBL" id="AK289451">
    <property type="protein sequence ID" value="BAF82140.1"/>
    <property type="molecule type" value="mRNA"/>
</dbReference>
<dbReference type="EMBL" id="AK001047">
    <property type="protein sequence ID" value="BAG50852.1"/>
    <property type="molecule type" value="mRNA"/>
</dbReference>
<dbReference type="EMBL" id="AK295257">
    <property type="protein sequence ID" value="BAG58246.1"/>
    <property type="molecule type" value="mRNA"/>
</dbReference>
<dbReference type="EMBL" id="AK222852">
    <property type="protein sequence ID" value="BAD96572.1"/>
    <property type="molecule type" value="mRNA"/>
</dbReference>
<dbReference type="EMBL" id="AC012454">
    <property type="status" value="NOT_ANNOTATED_CDS"/>
    <property type="molecule type" value="Genomic_DNA"/>
</dbReference>
<dbReference type="EMBL" id="AC016753">
    <property type="status" value="NOT_ANNOTATED_CDS"/>
    <property type="molecule type" value="Genomic_DNA"/>
</dbReference>
<dbReference type="EMBL" id="CH471053">
    <property type="protein sequence ID" value="EAW99490.1"/>
    <property type="molecule type" value="Genomic_DNA"/>
</dbReference>
<dbReference type="EMBL" id="CH471053">
    <property type="protein sequence ID" value="EAW99492.1"/>
    <property type="molecule type" value="Genomic_DNA"/>
</dbReference>
<dbReference type="EMBL" id="CH471053">
    <property type="protein sequence ID" value="EAW99493.1"/>
    <property type="molecule type" value="Genomic_DNA"/>
</dbReference>
<dbReference type="EMBL" id="CH471053">
    <property type="protein sequence ID" value="EAW99494.1"/>
    <property type="molecule type" value="Genomic_DNA"/>
</dbReference>
<dbReference type="EMBL" id="BC001384">
    <property type="protein sequence ID" value="AAH01384.2"/>
    <property type="molecule type" value="mRNA"/>
</dbReference>
<dbReference type="EMBL" id="BC067273">
    <property type="protein sequence ID" value="AAH67273.1"/>
    <property type="molecule type" value="mRNA"/>
</dbReference>
<dbReference type="EMBL" id="AF130096">
    <property type="protein sequence ID" value="AAG35521.1"/>
    <property type="status" value="ALT_INIT"/>
    <property type="molecule type" value="mRNA"/>
</dbReference>
<dbReference type="EMBL" id="AF161450">
    <property type="protein sequence ID" value="AAF29010.1"/>
    <property type="molecule type" value="mRNA"/>
</dbReference>
<dbReference type="CCDS" id="CCDS33234.1">
    <molecule id="Q53GS9-1"/>
</dbReference>
<dbReference type="CCDS" id="CCDS58716.1">
    <molecule id="Q53GS9-2"/>
</dbReference>
<dbReference type="CCDS" id="CCDS58717.1">
    <molecule id="Q53GS9-3"/>
</dbReference>
<dbReference type="RefSeq" id="NP_001243654.1">
    <molecule id="Q53GS9-1"/>
    <property type="nucleotide sequence ID" value="NM_001256725.2"/>
</dbReference>
<dbReference type="RefSeq" id="NP_001243655.1">
    <molecule id="Q53GS9-3"/>
    <property type="nucleotide sequence ID" value="NM_001256726.2"/>
</dbReference>
<dbReference type="RefSeq" id="NP_001243656.1">
    <property type="nucleotide sequence ID" value="NM_001256727.1"/>
</dbReference>
<dbReference type="RefSeq" id="NP_001243657.1">
    <molecule id="Q53GS9-2"/>
    <property type="nucleotide sequence ID" value="NM_001256728.2"/>
</dbReference>
<dbReference type="RefSeq" id="NP_006581.2">
    <molecule id="Q53GS9-1"/>
    <property type="nucleotide sequence ID" value="NM_006590.4"/>
</dbReference>
<dbReference type="RefSeq" id="XP_006711985.1">
    <property type="nucleotide sequence ID" value="XM_006711922.1"/>
</dbReference>
<dbReference type="RefSeq" id="XP_006711986.1">
    <property type="nucleotide sequence ID" value="XM_006711923.2"/>
</dbReference>
<dbReference type="RefSeq" id="XP_011530789.1">
    <property type="nucleotide sequence ID" value="XM_011532487.1"/>
</dbReference>
<dbReference type="RefSeq" id="XP_011530790.1">
    <property type="nucleotide sequence ID" value="XM_011532488.1"/>
</dbReference>
<dbReference type="RefSeq" id="XP_016858671.1">
    <property type="nucleotide sequence ID" value="XM_017003182.1"/>
</dbReference>
<dbReference type="PDB" id="3JCR">
    <property type="method" value="EM"/>
    <property type="resolution" value="7.00 A"/>
    <property type="chains" value="V=1-565"/>
</dbReference>
<dbReference type="PDB" id="6AH0">
    <property type="method" value="EM"/>
    <property type="resolution" value="5.70 A"/>
    <property type="chains" value="W=1-565"/>
</dbReference>
<dbReference type="PDB" id="6QW6">
    <property type="method" value="EM"/>
    <property type="resolution" value="2.92 A"/>
    <property type="chains" value="U=1-555"/>
</dbReference>
<dbReference type="PDB" id="6QX9">
    <property type="method" value="EM"/>
    <property type="resolution" value="3.28 A"/>
    <property type="chains" value="U=1-555"/>
</dbReference>
<dbReference type="PDB" id="8H6E">
    <property type="method" value="EM"/>
    <property type="resolution" value="3.20 A"/>
    <property type="chains" value="4T=1-565"/>
</dbReference>
<dbReference type="PDB" id="8H6J">
    <property type="method" value="EM"/>
    <property type="resolution" value="3.25 A"/>
    <property type="chains" value="4T=1-565"/>
</dbReference>
<dbReference type="PDB" id="8QOZ">
    <property type="method" value="EM"/>
    <property type="resolution" value="3.10 A"/>
    <property type="chains" value="U=1-565"/>
</dbReference>
<dbReference type="PDB" id="8QP8">
    <property type="method" value="EM"/>
    <property type="resolution" value="3.50 A"/>
    <property type="chains" value="U=1-565"/>
</dbReference>
<dbReference type="PDB" id="8QP9">
    <property type="method" value="EM"/>
    <property type="resolution" value="4.10 A"/>
    <property type="chains" value="U=1-565"/>
</dbReference>
<dbReference type="PDB" id="8QPA">
    <property type="method" value="EM"/>
    <property type="resolution" value="3.70 A"/>
    <property type="chains" value="U=1-565"/>
</dbReference>
<dbReference type="PDB" id="8QPB">
    <property type="method" value="EM"/>
    <property type="resolution" value="3.70 A"/>
    <property type="chains" value="U=1-565"/>
</dbReference>
<dbReference type="PDB" id="8QPE">
    <property type="method" value="EM"/>
    <property type="resolution" value="3.10 A"/>
    <property type="chains" value="U=1-565"/>
</dbReference>
<dbReference type="PDB" id="8QPK">
    <property type="method" value="EM"/>
    <property type="resolution" value="4.20 A"/>
    <property type="chains" value="U=1-565"/>
</dbReference>
<dbReference type="PDB" id="8QXD">
    <property type="method" value="EM"/>
    <property type="resolution" value="9.60 A"/>
    <property type="chains" value="U=1-565"/>
</dbReference>
<dbReference type="PDB" id="8QZS">
    <property type="method" value="EM"/>
    <property type="resolution" value="4.10 A"/>
    <property type="chains" value="U=1-565"/>
</dbReference>
<dbReference type="PDB" id="8R08">
    <property type="method" value="EM"/>
    <property type="resolution" value="6.10 A"/>
    <property type="chains" value="U=1-565"/>
</dbReference>
<dbReference type="PDB" id="8R09">
    <property type="method" value="EM"/>
    <property type="resolution" value="4.30 A"/>
    <property type="chains" value="U=1-565"/>
</dbReference>
<dbReference type="PDB" id="8R0A">
    <property type="method" value="EM"/>
    <property type="resolution" value="5.80 A"/>
    <property type="chains" value="U=1-565"/>
</dbReference>
<dbReference type="PDB" id="8R0B">
    <property type="method" value="EM"/>
    <property type="resolution" value="4.40 A"/>
    <property type="chains" value="U=1-565"/>
</dbReference>
<dbReference type="PDB" id="8RM5">
    <property type="method" value="EM"/>
    <property type="resolution" value="6.90 A"/>
    <property type="chains" value="U=1-565"/>
</dbReference>
<dbReference type="PDB" id="8Y6O">
    <property type="method" value="EM"/>
    <property type="resolution" value="3.38 A"/>
    <property type="chains" value="U=1-565"/>
</dbReference>
<dbReference type="PDBsum" id="3JCR"/>
<dbReference type="PDBsum" id="6AH0"/>
<dbReference type="PDBsum" id="6QW6"/>
<dbReference type="PDBsum" id="6QX9"/>
<dbReference type="PDBsum" id="8H6E"/>
<dbReference type="PDBsum" id="8H6J"/>
<dbReference type="PDBsum" id="8QOZ"/>
<dbReference type="PDBsum" id="8QP8"/>
<dbReference type="PDBsum" id="8QP9"/>
<dbReference type="PDBsum" id="8QPA"/>
<dbReference type="PDBsum" id="8QPB"/>
<dbReference type="PDBsum" id="8QPE"/>
<dbReference type="PDBsum" id="8QPK"/>
<dbReference type="PDBsum" id="8QXD"/>
<dbReference type="PDBsum" id="8QZS"/>
<dbReference type="PDBsum" id="8R08"/>
<dbReference type="PDBsum" id="8R09"/>
<dbReference type="PDBsum" id="8R0A"/>
<dbReference type="PDBsum" id="8R0B"/>
<dbReference type="PDBsum" id="8RM5"/>
<dbReference type="PDBsum" id="8Y6O"/>
<dbReference type="EMDB" id="EMD-18542"/>
<dbReference type="EMDB" id="EMD-18544"/>
<dbReference type="EMDB" id="EMD-18545"/>
<dbReference type="EMDB" id="EMD-18546"/>
<dbReference type="EMDB" id="EMD-18547"/>
<dbReference type="EMDB" id="EMD-18548"/>
<dbReference type="EMDB" id="EMD-18555"/>
<dbReference type="EMDB" id="EMD-18718"/>
<dbReference type="EMDB" id="EMD-18781"/>
<dbReference type="EMDB" id="EMD-18786"/>
<dbReference type="EMDB" id="EMD-18787"/>
<dbReference type="EMDB" id="EMD-18788"/>
<dbReference type="EMDB" id="EMD-18789"/>
<dbReference type="EMDB" id="EMD-19349"/>
<dbReference type="EMDB" id="EMD-34500"/>
<dbReference type="EMDB" id="EMD-34505"/>
<dbReference type="EMDB" id="EMD-38993"/>
<dbReference type="EMDB" id="EMD-4658"/>
<dbReference type="EMDB" id="EMD-4665"/>
<dbReference type="EMDB" id="EMD-9621"/>
<dbReference type="SMR" id="Q53GS9"/>
<dbReference type="BioGRID" id="115939">
    <property type="interactions" value="215"/>
</dbReference>
<dbReference type="ComplexPortal" id="CPX-2391">
    <property type="entry name" value="U4/U6.U5 small nuclear ribonucleoprotein complex"/>
</dbReference>
<dbReference type="CORUM" id="Q53GS9"/>
<dbReference type="FunCoup" id="Q53GS9">
    <property type="interactions" value="3526"/>
</dbReference>
<dbReference type="IntAct" id="Q53GS9">
    <property type="interactions" value="77"/>
</dbReference>
<dbReference type="MINT" id="Q53GS9"/>
<dbReference type="STRING" id="9606.ENSP00000312981"/>
<dbReference type="BindingDB" id="Q53GS9"/>
<dbReference type="ChEMBL" id="CHEMBL5291601"/>
<dbReference type="MEROPS" id="C19.972"/>
<dbReference type="GlyGen" id="Q53GS9">
    <property type="glycosylation" value="1 site, 1 O-linked glycan (1 site)"/>
</dbReference>
<dbReference type="iPTMnet" id="Q53GS9"/>
<dbReference type="MetOSite" id="Q53GS9"/>
<dbReference type="PhosphoSitePlus" id="Q53GS9"/>
<dbReference type="SwissPalm" id="Q53GS9"/>
<dbReference type="BioMuta" id="USP39"/>
<dbReference type="DMDM" id="88909655"/>
<dbReference type="jPOST" id="Q53GS9"/>
<dbReference type="MassIVE" id="Q53GS9"/>
<dbReference type="PaxDb" id="9606-ENSP00000312981"/>
<dbReference type="PeptideAtlas" id="Q53GS9"/>
<dbReference type="ProteomicsDB" id="33936"/>
<dbReference type="ProteomicsDB" id="4246"/>
<dbReference type="ProteomicsDB" id="62489">
    <molecule id="Q53GS9-1"/>
</dbReference>
<dbReference type="Pumba" id="Q53GS9"/>
<dbReference type="Antibodypedia" id="16981">
    <property type="antibodies" value="178 antibodies from 30 providers"/>
</dbReference>
<dbReference type="DNASU" id="10713"/>
<dbReference type="Ensembl" id="ENST00000323701.11">
    <molecule id="Q53GS9-1"/>
    <property type="protein sequence ID" value="ENSP00000312981.6"/>
    <property type="gene ID" value="ENSG00000168883.20"/>
</dbReference>
<dbReference type="Ensembl" id="ENST00000409470.5">
    <molecule id="Q53GS9-1"/>
    <property type="protein sequence ID" value="ENSP00000386864.1"/>
    <property type="gene ID" value="ENSG00000168883.20"/>
</dbReference>
<dbReference type="Ensembl" id="ENST00000409766.7">
    <molecule id="Q53GS9-3"/>
    <property type="protein sequence ID" value="ENSP00000386803.3"/>
    <property type="gene ID" value="ENSG00000168883.20"/>
</dbReference>
<dbReference type="Ensembl" id="ENST00000450066.6">
    <molecule id="Q53GS9-2"/>
    <property type="protein sequence ID" value="ENSP00000396133.2"/>
    <property type="gene ID" value="ENSG00000168883.20"/>
</dbReference>
<dbReference type="GeneID" id="10713"/>
<dbReference type="KEGG" id="hsa:10713"/>
<dbReference type="MANE-Select" id="ENST00000323701.11">
    <property type="protein sequence ID" value="ENSP00000312981.6"/>
    <property type="RefSeq nucleotide sequence ID" value="NM_006590.4"/>
    <property type="RefSeq protein sequence ID" value="NP_006581.2"/>
</dbReference>
<dbReference type="UCSC" id="uc002sqe.5">
    <molecule id="Q53GS9-1"/>
    <property type="organism name" value="human"/>
</dbReference>
<dbReference type="AGR" id="HGNC:20071"/>
<dbReference type="CTD" id="10713"/>
<dbReference type="DisGeNET" id="10713"/>
<dbReference type="GeneCards" id="USP39"/>
<dbReference type="HGNC" id="HGNC:20071">
    <property type="gene designation" value="USP39"/>
</dbReference>
<dbReference type="HPA" id="ENSG00000168883">
    <property type="expression patterns" value="Low tissue specificity"/>
</dbReference>
<dbReference type="MIM" id="611594">
    <property type="type" value="gene"/>
</dbReference>
<dbReference type="neXtProt" id="NX_Q53GS9"/>
<dbReference type="OpenTargets" id="ENSG00000168883"/>
<dbReference type="PharmGKB" id="PA134905136"/>
<dbReference type="VEuPathDB" id="HostDB:ENSG00000168883"/>
<dbReference type="eggNOG" id="KOG2026">
    <property type="taxonomic scope" value="Eukaryota"/>
</dbReference>
<dbReference type="GeneTree" id="ENSGT00390000007992"/>
<dbReference type="InParanoid" id="Q53GS9"/>
<dbReference type="OMA" id="QLRRFKC"/>
<dbReference type="OrthoDB" id="10263353at2759"/>
<dbReference type="PAN-GO" id="Q53GS9">
    <property type="GO annotations" value="0 GO annotations based on evolutionary models"/>
</dbReference>
<dbReference type="PhylomeDB" id="Q53GS9"/>
<dbReference type="TreeFam" id="TF300610"/>
<dbReference type="PathwayCommons" id="Q53GS9"/>
<dbReference type="Reactome" id="R-HSA-72163">
    <property type="pathway name" value="mRNA Splicing - Major Pathway"/>
</dbReference>
<dbReference type="SignaLink" id="Q53GS9"/>
<dbReference type="SIGNOR" id="Q53GS9"/>
<dbReference type="BioGRID-ORCS" id="10713">
    <property type="hits" value="728 hits in 1183 CRISPR screens"/>
</dbReference>
<dbReference type="CD-CODE" id="91857CE7">
    <property type="entry name" value="Nucleolus"/>
</dbReference>
<dbReference type="ChiTaRS" id="USP39">
    <property type="organism name" value="human"/>
</dbReference>
<dbReference type="GeneWiki" id="USP39"/>
<dbReference type="GenomeRNAi" id="10713"/>
<dbReference type="Pharos" id="Q53GS9">
    <property type="development level" value="Tbio"/>
</dbReference>
<dbReference type="PRO" id="PR:Q53GS9"/>
<dbReference type="Proteomes" id="UP000005640">
    <property type="component" value="Chromosome 2"/>
</dbReference>
<dbReference type="RNAct" id="Q53GS9">
    <property type="molecule type" value="protein"/>
</dbReference>
<dbReference type="Bgee" id="ENSG00000168883">
    <property type="expression patterns" value="Expressed in ventricular zone and 194 other cell types or tissues"/>
</dbReference>
<dbReference type="ExpressionAtlas" id="Q53GS9">
    <property type="expression patterns" value="baseline and differential"/>
</dbReference>
<dbReference type="GO" id="GO:0005654">
    <property type="term" value="C:nucleoplasm"/>
    <property type="evidence" value="ECO:0000314"/>
    <property type="project" value="HPA"/>
</dbReference>
<dbReference type="GO" id="GO:0005634">
    <property type="term" value="C:nucleus"/>
    <property type="evidence" value="ECO:0000314"/>
    <property type="project" value="UniProtKB"/>
</dbReference>
<dbReference type="GO" id="GO:0005681">
    <property type="term" value="C:spliceosomal complex"/>
    <property type="evidence" value="ECO:0007669"/>
    <property type="project" value="UniProtKB-KW"/>
</dbReference>
<dbReference type="GO" id="GO:0046540">
    <property type="term" value="C:U4/U6 x U5 tri-snRNP complex"/>
    <property type="evidence" value="ECO:0000314"/>
    <property type="project" value="UniProtKB"/>
</dbReference>
<dbReference type="GO" id="GO:0016787">
    <property type="term" value="F:hydrolase activity"/>
    <property type="evidence" value="ECO:0007669"/>
    <property type="project" value="UniProtKB-KW"/>
</dbReference>
<dbReference type="GO" id="GO:0008270">
    <property type="term" value="F:zinc ion binding"/>
    <property type="evidence" value="ECO:0007669"/>
    <property type="project" value="UniProtKB-KW"/>
</dbReference>
<dbReference type="GO" id="GO:0051301">
    <property type="term" value="P:cell division"/>
    <property type="evidence" value="ECO:0007669"/>
    <property type="project" value="UniProtKB-KW"/>
</dbReference>
<dbReference type="GO" id="GO:0006397">
    <property type="term" value="P:mRNA processing"/>
    <property type="evidence" value="ECO:0000304"/>
    <property type="project" value="ProtInc"/>
</dbReference>
<dbReference type="GO" id="GO:0000398">
    <property type="term" value="P:mRNA splicing, via spliceosome"/>
    <property type="evidence" value="ECO:0000314"/>
    <property type="project" value="UniProtKB"/>
</dbReference>
<dbReference type="GO" id="GO:0016579">
    <property type="term" value="P:protein deubiquitination"/>
    <property type="evidence" value="ECO:0007669"/>
    <property type="project" value="InterPro"/>
</dbReference>
<dbReference type="GO" id="GO:0008380">
    <property type="term" value="P:RNA splicing"/>
    <property type="evidence" value="ECO:0000304"/>
    <property type="project" value="ProtInc"/>
</dbReference>
<dbReference type="GO" id="GO:0000245">
    <property type="term" value="P:spliceosomal complex assembly"/>
    <property type="evidence" value="ECO:0000315"/>
    <property type="project" value="UniProtKB"/>
</dbReference>
<dbReference type="CDD" id="cd02669">
    <property type="entry name" value="Peptidase_C19M"/>
    <property type="match status" value="1"/>
</dbReference>
<dbReference type="FunFam" id="3.30.40.10:FF:000068">
    <property type="entry name" value="U4/U6.U5 tri-snRNP-associated protein 2"/>
    <property type="match status" value="1"/>
</dbReference>
<dbReference type="FunFam" id="3.90.70.10:FF:000030">
    <property type="entry name" value="U4/U6.U5 tri-snRNP-associated protein 2"/>
    <property type="match status" value="1"/>
</dbReference>
<dbReference type="Gene3D" id="3.90.70.10">
    <property type="entry name" value="Cysteine proteinases"/>
    <property type="match status" value="1"/>
</dbReference>
<dbReference type="Gene3D" id="3.30.40.10">
    <property type="entry name" value="Zinc/RING finger domain, C3HC4 (zinc finger)"/>
    <property type="match status" value="1"/>
</dbReference>
<dbReference type="InterPro" id="IPR038765">
    <property type="entry name" value="Papain-like_cys_pep_sf"/>
</dbReference>
<dbReference type="InterPro" id="IPR001394">
    <property type="entry name" value="Peptidase_C19_UCH"/>
</dbReference>
<dbReference type="InterPro" id="IPR050185">
    <property type="entry name" value="Ub_carboxyl-term_hydrolase"/>
</dbReference>
<dbReference type="InterPro" id="IPR033809">
    <property type="entry name" value="USP39"/>
</dbReference>
<dbReference type="InterPro" id="IPR028889">
    <property type="entry name" value="USP_dom"/>
</dbReference>
<dbReference type="InterPro" id="IPR013083">
    <property type="entry name" value="Znf_RING/FYVE/PHD"/>
</dbReference>
<dbReference type="InterPro" id="IPR001607">
    <property type="entry name" value="Znf_UBP"/>
</dbReference>
<dbReference type="PANTHER" id="PTHR21646:SF16">
    <property type="entry name" value="U4_U6.U5 TRI-SNRNP-ASSOCIATED PROTEIN 2"/>
    <property type="match status" value="1"/>
</dbReference>
<dbReference type="PANTHER" id="PTHR21646">
    <property type="entry name" value="UBIQUITIN CARBOXYL-TERMINAL HYDROLASE"/>
    <property type="match status" value="1"/>
</dbReference>
<dbReference type="Pfam" id="PF00443">
    <property type="entry name" value="UCH"/>
    <property type="match status" value="1"/>
</dbReference>
<dbReference type="Pfam" id="PF02148">
    <property type="entry name" value="zf-UBP"/>
    <property type="match status" value="1"/>
</dbReference>
<dbReference type="SMART" id="SM00290">
    <property type="entry name" value="ZnF_UBP"/>
    <property type="match status" value="1"/>
</dbReference>
<dbReference type="SUPFAM" id="SSF54001">
    <property type="entry name" value="Cysteine proteinases"/>
    <property type="match status" value="1"/>
</dbReference>
<dbReference type="SUPFAM" id="SSF57850">
    <property type="entry name" value="RING/U-box"/>
    <property type="match status" value="1"/>
</dbReference>
<dbReference type="PROSITE" id="PS50235">
    <property type="entry name" value="USP_3"/>
    <property type="match status" value="1"/>
</dbReference>
<dbReference type="PROSITE" id="PS50271">
    <property type="entry name" value="ZF_UBP"/>
    <property type="match status" value="1"/>
</dbReference>
<evidence type="ECO:0000250" key="1">
    <source>
        <dbReference type="UniProtKB" id="Q3TIX9"/>
    </source>
</evidence>
<evidence type="ECO:0000255" key="2">
    <source>
        <dbReference type="PROSITE-ProRule" id="PRU00502"/>
    </source>
</evidence>
<evidence type="ECO:0000256" key="3">
    <source>
        <dbReference type="SAM" id="MobiDB-lite"/>
    </source>
</evidence>
<evidence type="ECO:0000269" key="4">
    <source>
    </source>
</evidence>
<evidence type="ECO:0000269" key="5">
    <source>
    </source>
</evidence>
<evidence type="ECO:0000269" key="6">
    <source>
    </source>
</evidence>
<evidence type="ECO:0000269" key="7">
    <source>
    </source>
</evidence>
<evidence type="ECO:0000269" key="8">
    <source>
    </source>
</evidence>
<evidence type="ECO:0000269" key="9">
    <source>
    </source>
</evidence>
<evidence type="ECO:0000269" key="10">
    <source>
    </source>
</evidence>
<evidence type="ECO:0000269" key="11">
    <source>
    </source>
</evidence>
<evidence type="ECO:0000303" key="12">
    <source>
    </source>
</evidence>
<evidence type="ECO:0000303" key="13">
    <source>
    </source>
</evidence>
<evidence type="ECO:0000303" key="14">
    <source>
    </source>
</evidence>
<evidence type="ECO:0000305" key="15"/>
<evidence type="ECO:0000305" key="16">
    <source>
    </source>
</evidence>
<evidence type="ECO:0000312" key="17">
    <source>
        <dbReference type="HGNC" id="HGNC:20071"/>
    </source>
</evidence>
<evidence type="ECO:0007744" key="18">
    <source>
        <dbReference type="PDB" id="3JCR"/>
    </source>
</evidence>
<evidence type="ECO:0007744" key="19">
    <source>
    </source>
</evidence>
<evidence type="ECO:0007744" key="20">
    <source>
    </source>
</evidence>
<evidence type="ECO:0007744" key="21">
    <source>
    </source>
</evidence>
<evidence type="ECO:0007744" key="22">
    <source>
    </source>
</evidence>
<evidence type="ECO:0007744" key="23">
    <source>
    </source>
</evidence>
<evidence type="ECO:0007744" key="24">
    <source>
    </source>
</evidence>
<evidence type="ECO:0007829" key="25">
    <source>
        <dbReference type="PDB" id="8QOZ"/>
    </source>
</evidence>
<evidence type="ECO:0007829" key="26">
    <source>
        <dbReference type="PDB" id="8QP8"/>
    </source>
</evidence>
<accession>Q53GS9</accession>
<accession>A8K086</accession>
<accession>B3KM40</accession>
<accession>B4DHT4</accession>
<accession>D6W5L4</accession>
<accession>G5E9H0</accession>
<accession>Q6NX47</accession>
<accession>Q96RK9</accession>
<accession>Q9BV89</accession>
<accession>Q9H381</accession>
<accession>Q9P050</accession>
<accession>Q9Y310</accession>
<feature type="chain" id="PRO_0000223962" description="Ubiquitin carboxyl-terminal hydrolase 39">
    <location>
        <begin position="1"/>
        <end position="565"/>
    </location>
</feature>
<feature type="domain" description="USP">
    <location>
        <begin position="225"/>
        <end position="555"/>
    </location>
</feature>
<feature type="zinc finger region" description="UBP-type; degenerate" evidence="2">
    <location>
        <begin position="103"/>
        <end position="200"/>
    </location>
</feature>
<feature type="region of interest" description="Disordered" evidence="3">
    <location>
        <begin position="1"/>
        <end position="61"/>
    </location>
</feature>
<feature type="region of interest" description="Disordered" evidence="3">
    <location>
        <begin position="75"/>
        <end position="95"/>
    </location>
</feature>
<feature type="compositionally biased region" description="Basic and acidic residues" evidence="3">
    <location>
        <begin position="1"/>
        <end position="21"/>
    </location>
</feature>
<feature type="compositionally biased region" description="Basic and acidic residues" evidence="3">
    <location>
        <begin position="28"/>
        <end position="39"/>
    </location>
</feature>
<feature type="compositionally biased region" description="Basic and acidic residues" evidence="3">
    <location>
        <begin position="85"/>
        <end position="95"/>
    </location>
</feature>
<feature type="binding site" evidence="2">
    <location>
        <position position="136"/>
    </location>
    <ligand>
        <name>Zn(2+)</name>
        <dbReference type="ChEBI" id="CHEBI:29105"/>
    </ligand>
</feature>
<feature type="binding site" evidence="2">
    <location>
        <position position="139"/>
    </location>
    <ligand>
        <name>Zn(2+)</name>
        <dbReference type="ChEBI" id="CHEBI:29105"/>
    </ligand>
</feature>
<feature type="binding site" evidence="2">
    <location>
        <position position="155"/>
    </location>
    <ligand>
        <name>Zn(2+)</name>
        <dbReference type="ChEBI" id="CHEBI:29105"/>
    </ligand>
</feature>
<feature type="binding site" evidence="2">
    <location>
        <position position="161"/>
    </location>
    <ligand>
        <name>Zn(2+)</name>
        <dbReference type="ChEBI" id="CHEBI:29105"/>
    </ligand>
</feature>
<feature type="modified residue" description="Phosphoserine" evidence="22">
    <location>
        <position position="46"/>
    </location>
</feature>
<feature type="modified residue" description="Phosphoserine" evidence="19 20 21 22 23">
    <location>
        <position position="82"/>
    </location>
</feature>
<feature type="cross-link" description="Glycyl lysine isopeptide (Lys-Gly) (interchain with G-Cter in SUMO2)" evidence="24">
    <location>
        <position position="51"/>
    </location>
</feature>
<feature type="splice variant" id="VSP_045167" description="In isoform 2." evidence="13">
    <original>MSGRSKRESRGSTRGKRESESRGSSGRVKRERDREREPEAASSRGSPVRVKREFEPASAREAPASVVPFVRVKREREVDEDSEPEREVR</original>
    <variation>MLTAVPSHLFS</variation>
    <location>
        <begin position="1"/>
        <end position="89"/>
    </location>
</feature>
<feature type="splice variant" id="VSP_045168" description="In isoform 2." evidence="13">
    <original>RSVLDFDFEKLCSISLSHINAYACLVCGKYFQ</original>
    <variation>SFSPFPT</variation>
    <location>
        <begin position="113"/>
        <end position="144"/>
    </location>
</feature>
<feature type="splice variant" id="VSP_046822" description="In isoform 3." evidence="13">
    <original>NVDLREYLSEEVQAVHKNTTYDLIANIVHDGKPSEGSYRIHVLHHGTGKWYELQDLQVTDILPQMITLSEAYIQIWKRRDNDETNQQGA</original>
    <variation>GQANGMNYKTSR</variation>
    <location>
        <begin position="477"/>
        <end position="565"/>
    </location>
</feature>
<feature type="mutagenesis site" description="Complete loss of CHK2 and NFKBIA deubiquitination." evidence="8 11">
    <original>C</original>
    <variation>A</variation>
    <location>
        <position position="306"/>
    </location>
</feature>
<feature type="sequence conflict" description="In Ref. 4; BAD96572." evidence="15" ref="4">
    <original>T</original>
    <variation>I</variation>
    <location>
        <position position="13"/>
    </location>
</feature>
<feature type="sequence conflict" description="In Ref. 4; BAD96572." evidence="15" ref="4">
    <original>A</original>
    <variation>V</variation>
    <location>
        <position position="135"/>
    </location>
</feature>
<feature type="sequence conflict" description="In Ref. 3; BAG50852." evidence="15" ref="3">
    <original>F</original>
    <variation>S</variation>
    <location>
        <position position="277"/>
    </location>
</feature>
<feature type="sequence conflict" description="In Ref. 3; BAG50852." evidence="15" ref="3">
    <original>L</original>
    <variation>P</variation>
    <location>
        <position position="280"/>
    </location>
</feature>
<feature type="sequence conflict" description="In Ref. 3; BAG50852." evidence="15" ref="3">
    <original>V</original>
    <variation>A</variation>
    <location>
        <position position="294"/>
    </location>
</feature>
<feature type="sequence conflict" description="In Ref. 1; AAK49524." evidence="15" ref="1">
    <original>L</original>
    <variation>F</variation>
    <location>
        <position position="400"/>
    </location>
</feature>
<feature type="sequence conflict" description="In Ref. 2; AAD27730." evidence="15" ref="2">
    <original>R</original>
    <variation>I</variation>
    <location>
        <position position="456"/>
    </location>
</feature>
<feature type="helix" evidence="25">
    <location>
        <begin position="108"/>
        <end position="110"/>
    </location>
</feature>
<feature type="turn" evidence="25">
    <location>
        <begin position="125"/>
        <end position="127"/>
    </location>
</feature>
<feature type="strand" evidence="25">
    <location>
        <begin position="134"/>
        <end position="136"/>
    </location>
</feature>
<feature type="turn" evidence="25">
    <location>
        <begin position="137"/>
        <end position="139"/>
    </location>
</feature>
<feature type="strand" evidence="25">
    <location>
        <begin position="142"/>
        <end position="144"/>
    </location>
</feature>
<feature type="helix" evidence="25">
    <location>
        <begin position="151"/>
        <end position="159"/>
    </location>
</feature>
<feature type="strand" evidence="25">
    <location>
        <begin position="163"/>
        <end position="166"/>
    </location>
</feature>
<feature type="turn" evidence="25">
    <location>
        <begin position="167"/>
        <end position="169"/>
    </location>
</feature>
<feature type="strand" evidence="25">
    <location>
        <begin position="172"/>
        <end position="174"/>
    </location>
</feature>
<feature type="turn" evidence="25">
    <location>
        <begin position="175"/>
        <end position="178"/>
    </location>
</feature>
<feature type="strand" evidence="25">
    <location>
        <begin position="179"/>
        <end position="181"/>
    </location>
</feature>
<feature type="helix" evidence="25">
    <location>
        <begin position="184"/>
        <end position="186"/>
    </location>
</feature>
<feature type="helix" evidence="25">
    <location>
        <begin position="187"/>
        <end position="193"/>
    </location>
</feature>
<feature type="helix" evidence="25">
    <location>
        <begin position="199"/>
        <end position="203"/>
    </location>
</feature>
<feature type="strand" evidence="25">
    <location>
        <begin position="215"/>
        <end position="217"/>
    </location>
</feature>
<feature type="strand" evidence="26">
    <location>
        <begin position="219"/>
        <end position="221"/>
    </location>
</feature>
<feature type="strand" evidence="25">
    <location>
        <begin position="230"/>
        <end position="232"/>
    </location>
</feature>
<feature type="helix" evidence="25">
    <location>
        <begin position="234"/>
        <end position="245"/>
    </location>
</feature>
<feature type="helix" evidence="25">
    <location>
        <begin position="247"/>
        <end position="254"/>
    </location>
</feature>
<feature type="helix" evidence="25">
    <location>
        <begin position="256"/>
        <end position="258"/>
    </location>
</feature>
<feature type="strand" evidence="25">
    <location>
        <begin position="259"/>
        <end position="261"/>
    </location>
</feature>
<feature type="helix" evidence="25">
    <location>
        <begin position="270"/>
        <end position="284"/>
    </location>
</feature>
<feature type="strand" evidence="25">
    <location>
        <begin position="290"/>
        <end position="294"/>
    </location>
</feature>
<feature type="helix" evidence="25">
    <location>
        <begin position="297"/>
        <end position="307"/>
    </location>
</feature>
<feature type="strand" evidence="25">
    <location>
        <begin position="313"/>
        <end position="315"/>
    </location>
</feature>
<feature type="helix" evidence="25">
    <location>
        <begin position="319"/>
        <end position="333"/>
    </location>
</feature>
<feature type="strand" evidence="25">
    <location>
        <begin position="334"/>
        <end position="339"/>
    </location>
</feature>
<feature type="turn" evidence="25">
    <location>
        <begin position="344"/>
        <end position="349"/>
    </location>
</feature>
<feature type="strand" evidence="25">
    <location>
        <begin position="351"/>
        <end position="359"/>
    </location>
</feature>
<feature type="strand" evidence="25">
    <location>
        <begin position="363"/>
        <end position="365"/>
    </location>
</feature>
<feature type="helix" evidence="25">
    <location>
        <begin position="367"/>
        <end position="375"/>
    </location>
</feature>
<feature type="turn" evidence="25">
    <location>
        <begin position="376"/>
        <end position="379"/>
    </location>
</feature>
<feature type="strand" evidence="25">
    <location>
        <begin position="382"/>
        <end position="393"/>
    </location>
</feature>
<feature type="strand" evidence="25">
    <location>
        <begin position="404"/>
        <end position="408"/>
    </location>
</feature>
<feature type="strand" evidence="25">
    <location>
        <begin position="412"/>
        <end position="414"/>
    </location>
</feature>
<feature type="helix" evidence="25">
    <location>
        <begin position="415"/>
        <end position="418"/>
    </location>
</feature>
<feature type="strand" evidence="25">
    <location>
        <begin position="422"/>
        <end position="425"/>
    </location>
</feature>
<feature type="strand" evidence="26">
    <location>
        <begin position="428"/>
        <end position="430"/>
    </location>
</feature>
<feature type="strand" evidence="25">
    <location>
        <begin position="437"/>
        <end position="445"/>
    </location>
</feature>
<feature type="strand" evidence="25">
    <location>
        <begin position="448"/>
        <end position="454"/>
    </location>
</feature>
<feature type="strand" evidence="25">
    <location>
        <begin position="457"/>
        <end position="459"/>
    </location>
</feature>
<feature type="strand" evidence="25">
    <location>
        <begin position="461"/>
        <end position="465"/>
    </location>
</feature>
<feature type="strand" evidence="25">
    <location>
        <begin position="470"/>
        <end position="472"/>
    </location>
</feature>
<feature type="helix" evidence="25">
    <location>
        <begin position="481"/>
        <end position="483"/>
    </location>
</feature>
<feature type="helix" evidence="25">
    <location>
        <begin position="486"/>
        <end position="489"/>
    </location>
</feature>
<feature type="strand" evidence="25">
    <location>
        <begin position="498"/>
        <end position="507"/>
    </location>
</feature>
<feature type="strand" evidence="26">
    <location>
        <begin position="509"/>
        <end position="511"/>
    </location>
</feature>
<feature type="strand" evidence="25">
    <location>
        <begin position="513"/>
        <end position="519"/>
    </location>
</feature>
<feature type="turn" evidence="25">
    <location>
        <begin position="521"/>
        <end position="523"/>
    </location>
</feature>
<feature type="strand" evidence="25">
    <location>
        <begin position="526"/>
        <end position="530"/>
    </location>
</feature>
<feature type="strand" evidence="25">
    <location>
        <begin position="533"/>
        <end position="535"/>
    </location>
</feature>
<feature type="helix" evidence="25">
    <location>
        <begin position="540"/>
        <end position="542"/>
    </location>
</feature>
<feature type="strand" evidence="25">
    <location>
        <begin position="543"/>
        <end position="545"/>
    </location>
</feature>
<feature type="strand" evidence="25">
    <location>
        <begin position="547"/>
        <end position="553"/>
    </location>
</feature>
<protein>
    <recommendedName>
        <fullName evidence="14">Ubiquitin carboxyl-terminal hydrolase 39</fullName>
        <ecNumber evidence="8 11">3.4.19.12</ecNumber>
    </recommendedName>
    <alternativeName>
        <fullName evidence="12">SAD1 homolog</fullName>
    </alternativeName>
    <alternativeName>
        <fullName evidence="12">U4/U6.U5 tri-snRNP-associated 65 kDa protein</fullName>
    </alternativeName>
</protein>